<accession>Q720N8</accession>
<name>CBIA_LISMF</name>
<gene>
    <name evidence="1" type="primary">cbiA</name>
    <name type="ordered locus">LMOf2365_1200</name>
</gene>
<keyword id="KW-0067">ATP-binding</keyword>
<keyword id="KW-0169">Cobalamin biosynthesis</keyword>
<keyword id="KW-0315">Glutamine amidotransferase</keyword>
<keyword id="KW-0436">Ligase</keyword>
<keyword id="KW-0460">Magnesium</keyword>
<keyword id="KW-0547">Nucleotide-binding</keyword>
<proteinExistence type="inferred from homology"/>
<protein>
    <recommendedName>
        <fullName evidence="1">Cobyrinate a,c-diamide synthase</fullName>
        <ecNumber evidence="1">6.3.5.11</ecNumber>
    </recommendedName>
    <alternativeName>
        <fullName evidence="1">Cobyrinic acid a,c-diamide synthetase</fullName>
    </alternativeName>
</protein>
<dbReference type="EC" id="6.3.5.11" evidence="1"/>
<dbReference type="EMBL" id="AE017262">
    <property type="protein sequence ID" value="AAT03976.1"/>
    <property type="molecule type" value="Genomic_DNA"/>
</dbReference>
<dbReference type="RefSeq" id="WP_003724725.1">
    <property type="nucleotide sequence ID" value="NC_002973.6"/>
</dbReference>
<dbReference type="SMR" id="Q720N8"/>
<dbReference type="KEGG" id="lmf:LMOf2365_1200"/>
<dbReference type="HOGENOM" id="CLU_022752_2_0_9"/>
<dbReference type="UniPathway" id="UPA00148">
    <property type="reaction ID" value="UER00231"/>
</dbReference>
<dbReference type="GO" id="GO:0005524">
    <property type="term" value="F:ATP binding"/>
    <property type="evidence" value="ECO:0007669"/>
    <property type="project" value="UniProtKB-UniRule"/>
</dbReference>
<dbReference type="GO" id="GO:0042242">
    <property type="term" value="F:cobyrinic acid a,c-diamide synthase activity"/>
    <property type="evidence" value="ECO:0007669"/>
    <property type="project" value="UniProtKB-UniRule"/>
</dbReference>
<dbReference type="GO" id="GO:0009236">
    <property type="term" value="P:cobalamin biosynthetic process"/>
    <property type="evidence" value="ECO:0007669"/>
    <property type="project" value="UniProtKB-UniRule"/>
</dbReference>
<dbReference type="CDD" id="cd05388">
    <property type="entry name" value="CobB_N"/>
    <property type="match status" value="1"/>
</dbReference>
<dbReference type="CDD" id="cd03130">
    <property type="entry name" value="GATase1_CobB"/>
    <property type="match status" value="1"/>
</dbReference>
<dbReference type="Gene3D" id="3.40.50.880">
    <property type="match status" value="1"/>
</dbReference>
<dbReference type="Gene3D" id="3.40.50.300">
    <property type="entry name" value="P-loop containing nucleotide triphosphate hydrolases"/>
    <property type="match status" value="2"/>
</dbReference>
<dbReference type="HAMAP" id="MF_00027">
    <property type="entry name" value="CobB_CbiA"/>
    <property type="match status" value="1"/>
</dbReference>
<dbReference type="InterPro" id="IPR004484">
    <property type="entry name" value="CbiA/CobB_synth"/>
</dbReference>
<dbReference type="InterPro" id="IPR029062">
    <property type="entry name" value="Class_I_gatase-like"/>
</dbReference>
<dbReference type="InterPro" id="IPR002586">
    <property type="entry name" value="CobQ/CobB/MinD/ParA_Nub-bd_dom"/>
</dbReference>
<dbReference type="InterPro" id="IPR011698">
    <property type="entry name" value="GATase_3"/>
</dbReference>
<dbReference type="InterPro" id="IPR027417">
    <property type="entry name" value="P-loop_NTPase"/>
</dbReference>
<dbReference type="NCBIfam" id="TIGR00379">
    <property type="entry name" value="cobB"/>
    <property type="match status" value="1"/>
</dbReference>
<dbReference type="NCBIfam" id="NF002204">
    <property type="entry name" value="PRK01077.1"/>
    <property type="match status" value="1"/>
</dbReference>
<dbReference type="PANTHER" id="PTHR43873">
    <property type="entry name" value="COBYRINATE A,C-DIAMIDE SYNTHASE"/>
    <property type="match status" value="1"/>
</dbReference>
<dbReference type="PANTHER" id="PTHR43873:SF1">
    <property type="entry name" value="COBYRINATE A,C-DIAMIDE SYNTHASE"/>
    <property type="match status" value="1"/>
</dbReference>
<dbReference type="Pfam" id="PF01656">
    <property type="entry name" value="CbiA"/>
    <property type="match status" value="1"/>
</dbReference>
<dbReference type="Pfam" id="PF07685">
    <property type="entry name" value="GATase_3"/>
    <property type="match status" value="1"/>
</dbReference>
<dbReference type="SUPFAM" id="SSF52317">
    <property type="entry name" value="Class I glutamine amidotransferase-like"/>
    <property type="match status" value="1"/>
</dbReference>
<dbReference type="SUPFAM" id="SSF52540">
    <property type="entry name" value="P-loop containing nucleoside triphosphate hydrolases"/>
    <property type="match status" value="1"/>
</dbReference>
<dbReference type="PROSITE" id="PS51274">
    <property type="entry name" value="GATASE_COBBQ"/>
    <property type="match status" value="1"/>
</dbReference>
<comment type="function">
    <text evidence="1">Catalyzes the ATP-dependent amidation of the two carboxylate groups at positions a and c of cobyrinate, using either L-glutamine or ammonia as the nitrogen source.</text>
</comment>
<comment type="catalytic activity">
    <reaction evidence="1">
        <text>cob(II)yrinate + 2 L-glutamine + 2 ATP + 2 H2O = cob(II)yrinate a,c diamide + 2 L-glutamate + 2 ADP + 2 phosphate + 2 H(+)</text>
        <dbReference type="Rhea" id="RHEA:26289"/>
        <dbReference type="ChEBI" id="CHEBI:15377"/>
        <dbReference type="ChEBI" id="CHEBI:15378"/>
        <dbReference type="ChEBI" id="CHEBI:29985"/>
        <dbReference type="ChEBI" id="CHEBI:30616"/>
        <dbReference type="ChEBI" id="CHEBI:43474"/>
        <dbReference type="ChEBI" id="CHEBI:58359"/>
        <dbReference type="ChEBI" id="CHEBI:58537"/>
        <dbReference type="ChEBI" id="CHEBI:58894"/>
        <dbReference type="ChEBI" id="CHEBI:456216"/>
        <dbReference type="EC" id="6.3.5.11"/>
    </reaction>
</comment>
<comment type="cofactor">
    <cofactor evidence="1">
        <name>Mg(2+)</name>
        <dbReference type="ChEBI" id="CHEBI:18420"/>
    </cofactor>
</comment>
<comment type="pathway">
    <text evidence="1">Cofactor biosynthesis; adenosylcobalamin biosynthesis; cob(II)yrinate a,c-diamide from sirohydrochlorin (anaerobic route): step 10/10.</text>
</comment>
<comment type="domain">
    <text evidence="1">Comprises of two domains. The C-terminal domain contains the binding site for glutamine and catalyzes the hydrolysis of this substrate to glutamate and ammonia. The N-terminal domain is anticipated to bind ATP and cobyrinate and catalyzes the ultimate synthesis of the diamide product. The ammonia produced via the glutaminase domain is probably translocated to the adjacent domain via a molecular tunnel, where it reacts with an activated intermediate.</text>
</comment>
<comment type="miscellaneous">
    <text evidence="1">The a and c carboxylates of cobyrinate are activated for nucleophilic attack via formation of a phosphorylated intermediate by ATP. CbiA catalyzes first the amidation of the c-carboxylate, and then that of the a-carboxylate.</text>
</comment>
<comment type="similarity">
    <text evidence="1">Belongs to the CobB/CbiA family.</text>
</comment>
<evidence type="ECO:0000255" key="1">
    <source>
        <dbReference type="HAMAP-Rule" id="MF_00027"/>
    </source>
</evidence>
<organism>
    <name type="scientific">Listeria monocytogenes serotype 4b (strain F2365)</name>
    <dbReference type="NCBI Taxonomy" id="265669"/>
    <lineage>
        <taxon>Bacteria</taxon>
        <taxon>Bacillati</taxon>
        <taxon>Bacillota</taxon>
        <taxon>Bacilli</taxon>
        <taxon>Bacillales</taxon>
        <taxon>Listeriaceae</taxon>
        <taxon>Listeria</taxon>
    </lineage>
</organism>
<sequence length="452" mass="49818">MNKILIAAASSGTGKTTITLGIMHALKKRGLRVQPFKVGPDYIDTNYHQAITGVASINLDSFLIDDDAMLATLFQKHGESADISVIEGVMGLFDGLGIDRDNSSTSFIAKCTKTPVILVVDGKAISTSAAAIVDGFNRFDPELTIAGVIINRVASENHFSLIKGAIERYTDVPVLGYLPKNAAVALPERHLGLVPKEEMTELETKWELLGDLIAEHVDLDRLLAISKTGAKLTVHPPEIQVPDFSGVRVAYALDAAFHFYYQDNLDFIRSTGATLIPFSPLEEREVPDADFIYIGGGFPEVFAEQLAKNKSMRESILAAHEQGKPIYAECGGLMYLGSSLEMEAESYEMVGVFDGVSKMTTRLRKFGYCIAEPLEDTLLGKKGTAIRGHEFHHSVFETTEPTRMKLTKKRDGKIVKEWHGGYQKGNTFASYLHIHFYQNLLIITHMFGAIER</sequence>
<reference key="1">
    <citation type="journal article" date="2004" name="Nucleic Acids Res.">
        <title>Whole genome comparisons of serotype 4b and 1/2a strains of the food-borne pathogen Listeria monocytogenes reveal new insights into the core genome components of this species.</title>
        <authorList>
            <person name="Nelson K.E."/>
            <person name="Fouts D.E."/>
            <person name="Mongodin E.F."/>
            <person name="Ravel J."/>
            <person name="DeBoy R.T."/>
            <person name="Kolonay J.F."/>
            <person name="Rasko D.A."/>
            <person name="Angiuoli S.V."/>
            <person name="Gill S.R."/>
            <person name="Paulsen I.T."/>
            <person name="Peterson J.D."/>
            <person name="White O."/>
            <person name="Nelson W.C."/>
            <person name="Nierman W.C."/>
            <person name="Beanan M.J."/>
            <person name="Brinkac L.M."/>
            <person name="Daugherty S.C."/>
            <person name="Dodson R.J."/>
            <person name="Durkin A.S."/>
            <person name="Madupu R."/>
            <person name="Haft D.H."/>
            <person name="Selengut J."/>
            <person name="Van Aken S.E."/>
            <person name="Khouri H.M."/>
            <person name="Fedorova N."/>
            <person name="Forberger H.A."/>
            <person name="Tran B."/>
            <person name="Kathariou S."/>
            <person name="Wonderling L.D."/>
            <person name="Uhlich G.A."/>
            <person name="Bayles D.O."/>
            <person name="Luchansky J.B."/>
            <person name="Fraser C.M."/>
        </authorList>
    </citation>
    <scope>NUCLEOTIDE SEQUENCE [LARGE SCALE GENOMIC DNA]</scope>
    <source>
        <strain>F2365</strain>
    </source>
</reference>
<feature type="chain" id="PRO_0000141260" description="Cobyrinate a,c-diamide synthase">
    <location>
        <begin position="1"/>
        <end position="452"/>
    </location>
</feature>
<feature type="domain" description="GATase cobBQ-type" evidence="1">
    <location>
        <begin position="248"/>
        <end position="441"/>
    </location>
</feature>
<feature type="active site" description="Nucleophile" evidence="1">
    <location>
        <position position="330"/>
    </location>
</feature>
<feature type="site" description="Increases nucleophilicity of active site Cys" evidence="1">
    <location>
        <position position="433"/>
    </location>
</feature>